<protein>
    <recommendedName>
        <fullName evidence="13">Syndecan-1</fullName>
        <shortName evidence="13">SYND1</shortName>
    </recommendedName>
    <cdAntigenName>CD138</cdAntigenName>
</protein>
<comment type="function">
    <text evidence="1 8 9">Cell surface proteoglycan that contains both heparan sulfate and chondroitin sulfate and that links the cytoskeleton to the interstitial matrix (PubMed:8163535). Regulates exosome biogenesis in concert with SDCBP and PDCD6IP (By similarity). Able to induce its own expression in dental mesenchymal cells and also in the neighboring dental epithelial cells via an MSX1-mediated pathway (PubMed:8898217).</text>
</comment>
<comment type="subunit">
    <text evidence="1 2 7">Interacts with CDCP1 (By similarity). Interacts (via C-terminus) with TIAM1 (via PDZ domain) (PubMed:20361982). Interacts with MDK (By similarity).</text>
</comment>
<comment type="interaction">
    <interactant intactId="EBI-9985816">
        <id>P18828</id>
    </interactant>
    <interactant intactId="EBI-8869614">
        <id>Q15113</id>
        <label>PCOLCE</label>
    </interactant>
    <organismsDiffer>true</organismsDiffer>
    <experiments>4</experiments>
</comment>
<comment type="subcellular location">
    <subcellularLocation>
        <location evidence="3">Membrane</location>
        <topology evidence="3">Single-pass type I membrane protein</topology>
    </subcellularLocation>
    <subcellularLocation>
        <location evidence="5">Secreted</location>
    </subcellularLocation>
    <subcellularLocation>
        <location evidence="1">Secreted</location>
        <location evidence="1">Extracellular exosome</location>
    </subcellularLocation>
    <text evidence="5">Shedding of the ectodomain produces a soluble form.</text>
</comment>
<comment type="alternative products">
    <event type="alternative splicing"/>
    <isoform>
        <id>P18828-1</id>
        <name>1</name>
        <sequence type="displayed"/>
    </isoform>
    <isoform>
        <id>P18828-2</id>
        <name>2</name>
        <sequence type="described" ref="VSP_007542"/>
    </isoform>
</comment>
<comment type="developmental stage">
    <text evidence="9">Expressed in the dental mesenchyme at 13.5 dpc (at protein level).</text>
</comment>
<comment type="PTM">
    <text evidence="5">Shedding is enhanced by a number of factors such as heparanase, thrombin or EGF. Also by stress and wound healing. PMA-mediated shedding is inhibited by TIMP3.</text>
</comment>
<comment type="miscellaneous">
    <molecule>Isoform 1</molecule>
    <text>Major isoform.</text>
</comment>
<comment type="miscellaneous">
    <molecule>Isoform 2</molecule>
    <text evidence="11">Minor isoform.</text>
</comment>
<comment type="similarity">
    <text evidence="11">Belongs to the syndecan proteoglycan family.</text>
</comment>
<evidence type="ECO:0000250" key="1">
    <source>
        <dbReference type="UniProtKB" id="P18827"/>
    </source>
</evidence>
<evidence type="ECO:0000250" key="2">
    <source>
        <dbReference type="UniProtKB" id="P26260"/>
    </source>
</evidence>
<evidence type="ECO:0000255" key="3"/>
<evidence type="ECO:0000256" key="4">
    <source>
        <dbReference type="SAM" id="MobiDB-lite"/>
    </source>
</evidence>
<evidence type="ECO:0000269" key="5">
    <source>
    </source>
</evidence>
<evidence type="ECO:0000269" key="6">
    <source>
    </source>
</evidence>
<evidence type="ECO:0000269" key="7">
    <source>
    </source>
</evidence>
<evidence type="ECO:0000269" key="8">
    <source>
    </source>
</evidence>
<evidence type="ECO:0000269" key="9">
    <source>
    </source>
</evidence>
<evidence type="ECO:0000303" key="10">
    <source>
    </source>
</evidence>
<evidence type="ECO:0000305" key="11"/>
<evidence type="ECO:0000305" key="12">
    <source>
    </source>
</evidence>
<evidence type="ECO:0000312" key="13">
    <source>
        <dbReference type="MGI" id="MGI:1349162"/>
    </source>
</evidence>
<sequence>MRRAALWLWLCALALRLQPALPQIVAVNVPPEDQDGSGDDSDNFSGSGTGALPDTLSRQTPSTWKDVWLLTATPTAPEPTSSNTETAFTSVLPAGEKPEEGEPVLHVEAEPGFTARDKEKEVTTRPRETVQLPITQRASTVRVTTAQAAVTSHPHGGMQPGLHETSAPTAPGQPDHQPPRVEGGGTSVIKEVVEDGTANQLPAGEGSGEQDFTFETSGENTAVAAVEPGLRNQPPVDEGATGASQSLLDRKEVLGGVIAGGLVGLIFAVCLVAFMLYRMKKKDEGSYSLEEPKQANGGAYQKPTKQEEFYA</sequence>
<keyword id="KW-0025">Alternative splicing</keyword>
<keyword id="KW-0325">Glycoprotein</keyword>
<keyword id="KW-0357">Heparan sulfate</keyword>
<keyword id="KW-0472">Membrane</keyword>
<keyword id="KW-0597">Phosphoprotein</keyword>
<keyword id="KW-0654">Proteoglycan</keyword>
<keyword id="KW-1185">Reference proteome</keyword>
<keyword id="KW-0964">Secreted</keyword>
<keyword id="KW-0732">Signal</keyword>
<keyword id="KW-0812">Transmembrane</keyword>
<keyword id="KW-1133">Transmembrane helix</keyword>
<accession>P18828</accession>
<accession>Q62278</accession>
<accession>Q9WVD2</accession>
<proteinExistence type="evidence at protein level"/>
<name>SDC1_MOUSE</name>
<reference key="1">
    <citation type="journal article" date="1989" name="J. Cell Biol.">
        <title>Molecular cloning of syndecan, an integral membrane proteoglycan.</title>
        <authorList>
            <person name="Saunders S."/>
            <person name="Jalkanen M."/>
            <person name="O'Farrell S."/>
            <person name="Bernfield M."/>
        </authorList>
    </citation>
    <scope>NUCLEOTIDE SEQUENCE [MRNA] (ISOFORM 1)</scope>
    <source>
        <tissue>Mammary gland</tissue>
    </source>
</reference>
<reference key="2">
    <citation type="journal article" date="1993" name="J. Biol. Chem.">
        <title>Structural organization and genomic sequence of mouse syndecan-1 gene.</title>
        <authorList>
            <person name="Vihinen T."/>
            <person name="Auvinen P."/>
            <person name="Alanen-Kurki L."/>
            <person name="Jalkanen M."/>
        </authorList>
    </citation>
    <scope>NUCLEOTIDE SEQUENCE [GENOMIC DNA] (ISOFORM 1)</scope>
    <source>
        <strain>BALB/cJ</strain>
        <tissue>Liver</tissue>
    </source>
</reference>
<reference key="3">
    <citation type="journal article" date="1999" name="J. Biol. Chem.">
        <title>Molecular polymorphism of the syndecans. Identification of a hypo-glycanated murine syndecan-1 splice variant.</title>
        <authorList>
            <person name="Romaris M."/>
            <person name="Coomans C."/>
            <person name="Ceulemans H."/>
            <person name="Bruystens A.-M."/>
            <person name="Vekemans S."/>
            <person name="David G."/>
        </authorList>
    </citation>
    <scope>NUCLEOTIDE SEQUENCE [MRNA] (ISOFORM 2)</scope>
    <source>
        <strain>NMRI</strain>
        <tissue>Embryo</tissue>
    </source>
</reference>
<reference key="4">
    <citation type="journal article" date="2004" name="Genome Res.">
        <title>The status, quality, and expansion of the NIH full-length cDNA project: the Mammalian Gene Collection (MGC).</title>
        <authorList>
            <consortium name="The MGC Project Team"/>
        </authorList>
    </citation>
    <scope>NUCLEOTIDE SEQUENCE [LARGE SCALE MRNA] (ISOFORM 1)</scope>
    <source>
        <strain>Czech II</strain>
        <tissue>Mammary gland</tissue>
    </source>
</reference>
<reference key="5">
    <citation type="journal article" date="1993" name="J. Biol. Chem.">
        <title>Organization and promoter activity of the mouse syndecan-1 gene.</title>
        <authorList>
            <person name="Hinkes M.T."/>
            <person name="Goldberger O."/>
            <person name="Neumann P."/>
            <person name="Kokenyeji R."/>
            <person name="Bernfield M."/>
        </authorList>
    </citation>
    <scope>NUCLEOTIDE SEQUENCE [GENOMIC DNA] OF 1-22</scope>
    <source>
        <strain>BALB/cJ</strain>
        <tissue>Liver</tissue>
    </source>
</reference>
<reference key="6">
    <citation type="journal article" date="1994" name="J. Biol. Chem.">
        <title>Core protein structure and sequence determine the site and presence of heparan sulfate and chondroitin sulfate on syndecan-1.</title>
        <authorList>
            <person name="Kokenyesi R."/>
            <person name="Bernfield M."/>
        </authorList>
    </citation>
    <scope>FUNCTION</scope>
    <scope>GLYCOSYLATION AT SER-37; SER-45; SER-47; SER-207 AND SER-217</scope>
</reference>
<reference key="7">
    <citation type="journal article" date="1996" name="Development">
        <title>Msx1 controls inductive signaling in mammalian tooth morphogenesis.</title>
        <authorList>
            <person name="Chen Y."/>
            <person name="Bei M."/>
            <person name="Woo I."/>
            <person name="Satokata I."/>
            <person name="Maas R."/>
        </authorList>
    </citation>
    <scope>FUNCTION</scope>
    <scope>DEVELOPMENTAL STAGE</scope>
</reference>
<reference key="8">
    <citation type="journal article" date="2000" name="J. Cell Biol.">
        <title>Shedding of syndecan-1 and -4 ectodomains is regulated by multiple signaling pathways and mediated by a TIMP-3-sensitive metalloproteinase.</title>
        <authorList>
            <person name="Fitzgerald M.L."/>
            <person name="Wang Z."/>
            <person name="Park P.W."/>
            <person name="Murphy G."/>
            <person name="Bernfield M."/>
        </authorList>
    </citation>
    <scope>SHEDDING</scope>
    <scope>SUBCELLULAR LOCATION</scope>
</reference>
<reference key="9">
    <citation type="journal article" date="2005" name="Biochemistry">
        <title>Constitutive and accelerated shedding of murine syndecan-1 is mediated by cleavage of its core protein at a specific juxtamembrane site.</title>
        <authorList>
            <person name="Wang Z."/>
            <person name="Gotte M."/>
            <person name="Bernfield M."/>
            <person name="Reizes O."/>
        </authorList>
    </citation>
    <scope>PROTEOLYTIC CLEAVAGE AT ALA-243</scope>
    <scope>IDENTIFICATION BY MASS SPECTROMETRY</scope>
</reference>
<reference key="10">
    <citation type="journal article" date="2010" name="Cell">
        <title>A tissue-specific atlas of mouse protein phosphorylation and expression.</title>
        <authorList>
            <person name="Huttlin E.L."/>
            <person name="Jedrychowski M.P."/>
            <person name="Elias J.E."/>
            <person name="Goswami T."/>
            <person name="Rad R."/>
            <person name="Beausoleil S.A."/>
            <person name="Villen J."/>
            <person name="Haas W."/>
            <person name="Sowa M.E."/>
            <person name="Gygi S.P."/>
        </authorList>
    </citation>
    <scope>IDENTIFICATION BY MASS SPECTROMETRY [LARGE SCALE ANALYSIS]</scope>
    <source>
        <tissue>Liver</tissue>
        <tissue>Lung</tissue>
        <tissue>Pancreas</tissue>
    </source>
</reference>
<reference key="11">
    <citation type="journal article" date="2010" name="J. Mol. Biol.">
        <title>The Tiam1 PDZ domain couples to Syndecan1 and promotes cell-matrix adhesion.</title>
        <authorList>
            <person name="Shepherd T.R."/>
            <person name="Klaus S.M."/>
            <person name="Liu X."/>
            <person name="Ramaswamy S."/>
            <person name="DeMali K.A."/>
            <person name="Fuentes E.J."/>
        </authorList>
    </citation>
    <scope>INTERACTION WITH TIAM1</scope>
</reference>
<gene>
    <name evidence="13" type="primary">Sdc1</name>
    <name evidence="13" type="synonym">Synd-1</name>
    <name evidence="13" type="synonym">Synd1</name>
</gene>
<dbReference type="EMBL" id="X15487">
    <property type="protein sequence ID" value="CAA33514.1"/>
    <property type="molecule type" value="mRNA"/>
</dbReference>
<dbReference type="EMBL" id="Z22532">
    <property type="protein sequence ID" value="CAA80254.1"/>
    <property type="molecule type" value="Genomic_DNA"/>
</dbReference>
<dbReference type="EMBL" id="AF134897">
    <property type="protein sequence ID" value="AAD42345.1"/>
    <property type="molecule type" value="mRNA"/>
</dbReference>
<dbReference type="EMBL" id="BC010560">
    <property type="protein sequence ID" value="AAH10560.1"/>
    <property type="molecule type" value="mRNA"/>
</dbReference>
<dbReference type="EMBL" id="L11565">
    <property type="protein sequence ID" value="AAA40159.1"/>
    <property type="molecule type" value="Genomic_DNA"/>
</dbReference>
<dbReference type="CCDS" id="CCDS25803.1">
    <molecule id="P18828-1"/>
</dbReference>
<dbReference type="PIR" id="S06619">
    <property type="entry name" value="S06619"/>
</dbReference>
<dbReference type="RefSeq" id="NP_035649.1">
    <molecule id="P18828-1"/>
    <property type="nucleotide sequence ID" value="NM_011519.2"/>
</dbReference>
<dbReference type="BioGRID" id="203602">
    <property type="interactions" value="3"/>
</dbReference>
<dbReference type="ComplexPortal" id="CPX-3283">
    <property type="entry name" value="Syndecan-1-syntenin-1-ALIX complex"/>
</dbReference>
<dbReference type="FunCoup" id="P18828">
    <property type="interactions" value="339"/>
</dbReference>
<dbReference type="IntAct" id="P18828">
    <property type="interactions" value="1"/>
</dbReference>
<dbReference type="STRING" id="10090.ENSMUSP00000020911"/>
<dbReference type="GlyCosmos" id="P18828">
    <property type="glycosylation" value="6 sites, No reported glycans"/>
</dbReference>
<dbReference type="GlyGen" id="P18828">
    <property type="glycosylation" value="6 sites"/>
</dbReference>
<dbReference type="iPTMnet" id="P18828"/>
<dbReference type="PhosphoSitePlus" id="P18828"/>
<dbReference type="CPTAC" id="non-CPTAC-4060"/>
<dbReference type="PaxDb" id="10090-ENSMUSP00000020911"/>
<dbReference type="PeptideAtlas" id="P18828"/>
<dbReference type="ProteomicsDB" id="256716">
    <molecule id="P18828-1"/>
</dbReference>
<dbReference type="ProteomicsDB" id="256717">
    <molecule id="P18828-2"/>
</dbReference>
<dbReference type="Pumba" id="P18828"/>
<dbReference type="Antibodypedia" id="1489">
    <property type="antibodies" value="1676 antibodies from 53 providers"/>
</dbReference>
<dbReference type="DNASU" id="20969"/>
<dbReference type="Ensembl" id="ENSMUST00000020911.14">
    <molecule id="P18828-1"/>
    <property type="protein sequence ID" value="ENSMUSP00000020911.8"/>
    <property type="gene ID" value="ENSMUSG00000020592.16"/>
</dbReference>
<dbReference type="GeneID" id="20969"/>
<dbReference type="KEGG" id="mmu:20969"/>
<dbReference type="UCSC" id="uc007nac.1">
    <molecule id="P18828-1"/>
    <property type="organism name" value="mouse"/>
</dbReference>
<dbReference type="UCSC" id="uc007nad.1">
    <molecule id="P18828-2"/>
    <property type="organism name" value="mouse"/>
</dbReference>
<dbReference type="AGR" id="MGI:1349162"/>
<dbReference type="CTD" id="6382"/>
<dbReference type="MGI" id="MGI:1349162">
    <property type="gene designation" value="Sdc1"/>
</dbReference>
<dbReference type="VEuPathDB" id="HostDB:ENSMUSG00000020592"/>
<dbReference type="eggNOG" id="ENOG502RZWT">
    <property type="taxonomic scope" value="Eukaryota"/>
</dbReference>
<dbReference type="GeneTree" id="ENSGT00940000161171"/>
<dbReference type="HOGENOM" id="CLU_887201_0_0_1"/>
<dbReference type="InParanoid" id="P18828"/>
<dbReference type="OMA" id="VFCFQAV"/>
<dbReference type="OrthoDB" id="10044468at2759"/>
<dbReference type="PhylomeDB" id="P18828"/>
<dbReference type="TreeFam" id="TF320463"/>
<dbReference type="Reactome" id="R-MMU-1971475">
    <property type="pathway name" value="A tetrasaccharide linker sequence is required for GAG synthesis"/>
</dbReference>
<dbReference type="Reactome" id="R-MMU-2022928">
    <property type="pathway name" value="HS-GAG biosynthesis"/>
</dbReference>
<dbReference type="Reactome" id="R-MMU-2024096">
    <property type="pathway name" value="HS-GAG degradation"/>
</dbReference>
<dbReference type="Reactome" id="R-MMU-202733">
    <property type="pathway name" value="Cell surface interactions at the vascular wall"/>
</dbReference>
<dbReference type="Reactome" id="R-MMU-3000170">
    <property type="pathway name" value="Syndecan interactions"/>
</dbReference>
<dbReference type="Reactome" id="R-MMU-449836">
    <property type="pathway name" value="Other interleukin signaling"/>
</dbReference>
<dbReference type="Reactome" id="R-MMU-975634">
    <property type="pathway name" value="Retinoid metabolism and transport"/>
</dbReference>
<dbReference type="BioGRID-ORCS" id="20969">
    <property type="hits" value="1 hit in 78 CRISPR screens"/>
</dbReference>
<dbReference type="ChiTaRS" id="Sdc1">
    <property type="organism name" value="mouse"/>
</dbReference>
<dbReference type="PRO" id="PR:P18828"/>
<dbReference type="Proteomes" id="UP000000589">
    <property type="component" value="Chromosome 12"/>
</dbReference>
<dbReference type="RNAct" id="P18828">
    <property type="molecule type" value="protein"/>
</dbReference>
<dbReference type="Bgee" id="ENSMUSG00000020592">
    <property type="expression patterns" value="Expressed in cumulus cell and 230 other cell types or tissues"/>
</dbReference>
<dbReference type="ExpressionAtlas" id="P18828">
    <property type="expression patterns" value="baseline and differential"/>
</dbReference>
<dbReference type="GO" id="GO:0009986">
    <property type="term" value="C:cell surface"/>
    <property type="evidence" value="ECO:0000314"/>
    <property type="project" value="MGI"/>
</dbReference>
<dbReference type="GO" id="GO:0009897">
    <property type="term" value="C:external side of plasma membrane"/>
    <property type="evidence" value="ECO:0000314"/>
    <property type="project" value="MGI"/>
</dbReference>
<dbReference type="GO" id="GO:0005576">
    <property type="term" value="C:extracellular region"/>
    <property type="evidence" value="ECO:0000304"/>
    <property type="project" value="Reactome"/>
</dbReference>
<dbReference type="GO" id="GO:0005796">
    <property type="term" value="C:Golgi lumen"/>
    <property type="evidence" value="ECO:0000304"/>
    <property type="project" value="Reactome"/>
</dbReference>
<dbReference type="GO" id="GO:0005886">
    <property type="term" value="C:plasma membrane"/>
    <property type="evidence" value="ECO:0000315"/>
    <property type="project" value="MGI"/>
</dbReference>
<dbReference type="GO" id="GO:0038024">
    <property type="term" value="F:cargo receptor activity"/>
    <property type="evidence" value="ECO:0000315"/>
    <property type="project" value="MGI"/>
</dbReference>
<dbReference type="GO" id="GO:0042802">
    <property type="term" value="F:identical protein binding"/>
    <property type="evidence" value="ECO:0007669"/>
    <property type="project" value="Ensembl"/>
</dbReference>
<dbReference type="GO" id="GO:0060070">
    <property type="term" value="P:canonical Wnt signaling pathway"/>
    <property type="evidence" value="ECO:0000315"/>
    <property type="project" value="MGI"/>
</dbReference>
<dbReference type="GO" id="GO:0048627">
    <property type="term" value="P:myoblast development"/>
    <property type="evidence" value="ECO:0000314"/>
    <property type="project" value="UniProtKB"/>
</dbReference>
<dbReference type="GO" id="GO:1903543">
    <property type="term" value="P:positive regulation of exosomal secretion"/>
    <property type="evidence" value="ECO:0007669"/>
    <property type="project" value="Ensembl"/>
</dbReference>
<dbReference type="GO" id="GO:1903553">
    <property type="term" value="P:positive regulation of extracellular exosome assembly"/>
    <property type="evidence" value="ECO:0007669"/>
    <property type="project" value="Ensembl"/>
</dbReference>
<dbReference type="GO" id="GO:0006898">
    <property type="term" value="P:receptor-mediated endocytosis"/>
    <property type="evidence" value="ECO:0000315"/>
    <property type="project" value="MGI"/>
</dbReference>
<dbReference type="GO" id="GO:0055002">
    <property type="term" value="P:striated muscle cell development"/>
    <property type="evidence" value="ECO:0007669"/>
    <property type="project" value="Ensembl"/>
</dbReference>
<dbReference type="InterPro" id="IPR003585">
    <property type="entry name" value="Neurexin-like"/>
</dbReference>
<dbReference type="InterPro" id="IPR001050">
    <property type="entry name" value="Syndecan"/>
</dbReference>
<dbReference type="InterPro" id="IPR027789">
    <property type="entry name" value="Syndecan/Neurexin_dom"/>
</dbReference>
<dbReference type="InterPro" id="IPR030479">
    <property type="entry name" value="Syndecan_CS"/>
</dbReference>
<dbReference type="PANTHER" id="PTHR10915">
    <property type="entry name" value="SYNDECAN"/>
    <property type="match status" value="1"/>
</dbReference>
<dbReference type="PANTHER" id="PTHR10915:SF5">
    <property type="entry name" value="SYNDECAN-1"/>
    <property type="match status" value="1"/>
</dbReference>
<dbReference type="Pfam" id="PF01034">
    <property type="entry name" value="Syndecan"/>
    <property type="match status" value="1"/>
</dbReference>
<dbReference type="SMART" id="SM00294">
    <property type="entry name" value="4.1m"/>
    <property type="match status" value="1"/>
</dbReference>
<dbReference type="PROSITE" id="PS00964">
    <property type="entry name" value="SYNDECAN"/>
    <property type="match status" value="1"/>
</dbReference>
<organism>
    <name type="scientific">Mus musculus</name>
    <name type="common">Mouse</name>
    <dbReference type="NCBI Taxonomy" id="10090"/>
    <lineage>
        <taxon>Eukaryota</taxon>
        <taxon>Metazoa</taxon>
        <taxon>Chordata</taxon>
        <taxon>Craniata</taxon>
        <taxon>Vertebrata</taxon>
        <taxon>Euteleostomi</taxon>
        <taxon>Mammalia</taxon>
        <taxon>Eutheria</taxon>
        <taxon>Euarchontoglires</taxon>
        <taxon>Glires</taxon>
        <taxon>Rodentia</taxon>
        <taxon>Myomorpha</taxon>
        <taxon>Muroidea</taxon>
        <taxon>Muridae</taxon>
        <taxon>Murinae</taxon>
        <taxon>Mus</taxon>
        <taxon>Mus</taxon>
    </lineage>
</organism>
<feature type="signal peptide" evidence="3">
    <location>
        <begin position="1"/>
        <end position="22"/>
    </location>
</feature>
<feature type="chain" id="PRO_0000033501" description="Syndecan-1">
    <location>
        <begin position="23"/>
        <end position="311"/>
    </location>
</feature>
<feature type="topological domain" description="Extracellular" evidence="3">
    <location>
        <begin position="23"/>
        <end position="255"/>
    </location>
</feature>
<feature type="transmembrane region" description="Helical" evidence="3">
    <location>
        <begin position="256"/>
        <end position="276"/>
    </location>
</feature>
<feature type="topological domain" description="Cytoplasmic" evidence="3">
    <location>
        <begin position="277"/>
        <end position="311"/>
    </location>
</feature>
<feature type="region of interest" description="Disordered" evidence="4">
    <location>
        <begin position="29"/>
        <end position="59"/>
    </location>
</feature>
<feature type="region of interest" description="Disordered" evidence="4">
    <location>
        <begin position="152"/>
        <end position="184"/>
    </location>
</feature>
<feature type="region of interest" description="Disordered" evidence="4">
    <location>
        <begin position="285"/>
        <end position="311"/>
    </location>
</feature>
<feature type="compositionally biased region" description="Acidic residues" evidence="4">
    <location>
        <begin position="32"/>
        <end position="42"/>
    </location>
</feature>
<feature type="site" description="Cleavage" evidence="6">
    <location>
        <begin position="243"/>
        <end position="244"/>
    </location>
</feature>
<feature type="modified residue" description="Phosphoserine" evidence="1">
    <location>
        <position position="286"/>
    </location>
</feature>
<feature type="glycosylation site" description="O-linked (Xyl...) (chondroitin sulfate) serine" evidence="12">
    <location>
        <position position="37"/>
    </location>
</feature>
<feature type="glycosylation site" description="N-linked (GlcNAc...) asparagine" evidence="3">
    <location>
        <position position="43"/>
    </location>
</feature>
<feature type="glycosylation site" description="O-linked (Xyl...) (heparan sulfate) serine" evidence="12">
    <location>
        <position position="45"/>
    </location>
</feature>
<feature type="glycosylation site" description="O-linked (Xyl...) (heparan sulfate) serine" evidence="12">
    <location>
        <position position="47"/>
    </location>
</feature>
<feature type="glycosylation site" description="O-linked (Xyl...) (chondroitin sulfate) serine" evidence="8">
    <location>
        <position position="207"/>
    </location>
</feature>
<feature type="glycosylation site" description="O-linked (Xyl...) (chondroitin sulfate) serine" evidence="8">
    <location>
        <position position="217"/>
    </location>
</feature>
<feature type="splice variant" id="VSP_007542" description="In isoform 2." evidence="10">
    <location>
        <begin position="50"/>
        <end position="93"/>
    </location>
</feature>
<feature type="sequence conflict" description="In Ref. 5; AAA40159." evidence="11" ref="5">
    <original>L</original>
    <variation>V</variation>
    <location>
        <position position="21"/>
    </location>
</feature>